<feature type="chain" id="PRO_1000186249" description="Thymidine phosphorylase">
    <location>
        <begin position="1"/>
        <end position="440"/>
    </location>
</feature>
<dbReference type="EC" id="2.4.2.4" evidence="1"/>
<dbReference type="EMBL" id="FM180568">
    <property type="protein sequence ID" value="CAS12228.1"/>
    <property type="molecule type" value="Genomic_DNA"/>
</dbReference>
<dbReference type="RefSeq" id="WP_000477825.1">
    <property type="nucleotide sequence ID" value="NC_011601.1"/>
</dbReference>
<dbReference type="SMR" id="B7UR10"/>
<dbReference type="KEGG" id="ecg:E2348C_4680"/>
<dbReference type="HOGENOM" id="CLU_025040_0_1_6"/>
<dbReference type="UniPathway" id="UPA00578">
    <property type="reaction ID" value="UER00638"/>
</dbReference>
<dbReference type="Proteomes" id="UP000008205">
    <property type="component" value="Chromosome"/>
</dbReference>
<dbReference type="GO" id="GO:0005829">
    <property type="term" value="C:cytosol"/>
    <property type="evidence" value="ECO:0007669"/>
    <property type="project" value="TreeGrafter"/>
</dbReference>
<dbReference type="GO" id="GO:0004645">
    <property type="term" value="F:1,4-alpha-oligoglucan phosphorylase activity"/>
    <property type="evidence" value="ECO:0007669"/>
    <property type="project" value="InterPro"/>
</dbReference>
<dbReference type="GO" id="GO:0009032">
    <property type="term" value="F:thymidine phosphorylase activity"/>
    <property type="evidence" value="ECO:0007669"/>
    <property type="project" value="UniProtKB-UniRule"/>
</dbReference>
<dbReference type="GO" id="GO:0006206">
    <property type="term" value="P:pyrimidine nucleobase metabolic process"/>
    <property type="evidence" value="ECO:0007669"/>
    <property type="project" value="InterPro"/>
</dbReference>
<dbReference type="GO" id="GO:0046104">
    <property type="term" value="P:thymidine metabolic process"/>
    <property type="evidence" value="ECO:0007669"/>
    <property type="project" value="UniProtKB-UniRule"/>
</dbReference>
<dbReference type="FunFam" id="3.40.1030.10:FF:000001">
    <property type="entry name" value="Thymidine phosphorylase"/>
    <property type="match status" value="1"/>
</dbReference>
<dbReference type="FunFam" id="3.90.1170.30:FF:000001">
    <property type="entry name" value="Thymidine phosphorylase"/>
    <property type="match status" value="1"/>
</dbReference>
<dbReference type="Gene3D" id="3.40.1030.10">
    <property type="entry name" value="Nucleoside phosphorylase/phosphoribosyltransferase catalytic domain"/>
    <property type="match status" value="1"/>
</dbReference>
<dbReference type="Gene3D" id="3.90.1170.30">
    <property type="entry name" value="Pyrimidine nucleoside phosphorylase-like, C-terminal domain"/>
    <property type="match status" value="1"/>
</dbReference>
<dbReference type="Gene3D" id="1.20.970.10">
    <property type="entry name" value="Transferase, Pyrimidine Nucleoside Phosphorylase, Chain C"/>
    <property type="match status" value="1"/>
</dbReference>
<dbReference type="HAMAP" id="MF_01628">
    <property type="entry name" value="Thymid_phosp"/>
    <property type="match status" value="1"/>
</dbReference>
<dbReference type="InterPro" id="IPR000312">
    <property type="entry name" value="Glycosyl_Trfase_fam3"/>
</dbReference>
<dbReference type="InterPro" id="IPR017459">
    <property type="entry name" value="Glycosyl_Trfase_fam3_N_dom"/>
</dbReference>
<dbReference type="InterPro" id="IPR036320">
    <property type="entry name" value="Glycosyl_Trfase_fam3_N_dom_sf"/>
</dbReference>
<dbReference type="InterPro" id="IPR035902">
    <property type="entry name" value="Nuc_phospho_transferase"/>
</dbReference>
<dbReference type="InterPro" id="IPR036566">
    <property type="entry name" value="PYNP-like_C_sf"/>
</dbReference>
<dbReference type="InterPro" id="IPR013102">
    <property type="entry name" value="PYNP_C"/>
</dbReference>
<dbReference type="InterPro" id="IPR018090">
    <property type="entry name" value="Pyrmidine_PPas_bac/euk"/>
</dbReference>
<dbReference type="InterPro" id="IPR017872">
    <property type="entry name" value="Pyrmidine_PPase_CS"/>
</dbReference>
<dbReference type="InterPro" id="IPR000053">
    <property type="entry name" value="Thymidine/pyrmidine_PPase"/>
</dbReference>
<dbReference type="InterPro" id="IPR013465">
    <property type="entry name" value="Thymidine_Pase"/>
</dbReference>
<dbReference type="NCBIfam" id="NF004490">
    <property type="entry name" value="PRK05820.1"/>
    <property type="match status" value="1"/>
</dbReference>
<dbReference type="NCBIfam" id="TIGR02643">
    <property type="entry name" value="T_phosphoryl"/>
    <property type="match status" value="1"/>
</dbReference>
<dbReference type="NCBIfam" id="TIGR02644">
    <property type="entry name" value="Y_phosphoryl"/>
    <property type="match status" value="1"/>
</dbReference>
<dbReference type="PANTHER" id="PTHR10515">
    <property type="entry name" value="THYMIDINE PHOSPHORYLASE"/>
    <property type="match status" value="1"/>
</dbReference>
<dbReference type="PANTHER" id="PTHR10515:SF0">
    <property type="entry name" value="THYMIDINE PHOSPHORYLASE"/>
    <property type="match status" value="1"/>
</dbReference>
<dbReference type="Pfam" id="PF02885">
    <property type="entry name" value="Glycos_trans_3N"/>
    <property type="match status" value="1"/>
</dbReference>
<dbReference type="Pfam" id="PF00591">
    <property type="entry name" value="Glycos_transf_3"/>
    <property type="match status" value="1"/>
</dbReference>
<dbReference type="Pfam" id="PF07831">
    <property type="entry name" value="PYNP_C"/>
    <property type="match status" value="1"/>
</dbReference>
<dbReference type="PIRSF" id="PIRSF000478">
    <property type="entry name" value="TP_PyNP"/>
    <property type="match status" value="1"/>
</dbReference>
<dbReference type="SMART" id="SM00941">
    <property type="entry name" value="PYNP_C"/>
    <property type="match status" value="1"/>
</dbReference>
<dbReference type="SUPFAM" id="SSF52418">
    <property type="entry name" value="Nucleoside phosphorylase/phosphoribosyltransferase catalytic domain"/>
    <property type="match status" value="1"/>
</dbReference>
<dbReference type="SUPFAM" id="SSF47648">
    <property type="entry name" value="Nucleoside phosphorylase/phosphoribosyltransferase N-terminal domain"/>
    <property type="match status" value="1"/>
</dbReference>
<dbReference type="SUPFAM" id="SSF54680">
    <property type="entry name" value="Pyrimidine nucleoside phosphorylase C-terminal domain"/>
    <property type="match status" value="1"/>
</dbReference>
<dbReference type="PROSITE" id="PS00647">
    <property type="entry name" value="THYMID_PHOSPHORYLASE"/>
    <property type="match status" value="1"/>
</dbReference>
<reference key="1">
    <citation type="journal article" date="2009" name="J. Bacteriol.">
        <title>Complete genome sequence and comparative genome analysis of enteropathogenic Escherichia coli O127:H6 strain E2348/69.</title>
        <authorList>
            <person name="Iguchi A."/>
            <person name="Thomson N.R."/>
            <person name="Ogura Y."/>
            <person name="Saunders D."/>
            <person name="Ooka T."/>
            <person name="Henderson I.R."/>
            <person name="Harris D."/>
            <person name="Asadulghani M."/>
            <person name="Kurokawa K."/>
            <person name="Dean P."/>
            <person name="Kenny B."/>
            <person name="Quail M.A."/>
            <person name="Thurston S."/>
            <person name="Dougan G."/>
            <person name="Hayashi T."/>
            <person name="Parkhill J."/>
            <person name="Frankel G."/>
        </authorList>
    </citation>
    <scope>NUCLEOTIDE SEQUENCE [LARGE SCALE GENOMIC DNA]</scope>
    <source>
        <strain>E2348/69 / EPEC</strain>
    </source>
</reference>
<organism>
    <name type="scientific">Escherichia coli O127:H6 (strain E2348/69 / EPEC)</name>
    <dbReference type="NCBI Taxonomy" id="574521"/>
    <lineage>
        <taxon>Bacteria</taxon>
        <taxon>Pseudomonadati</taxon>
        <taxon>Pseudomonadota</taxon>
        <taxon>Gammaproteobacteria</taxon>
        <taxon>Enterobacterales</taxon>
        <taxon>Enterobacteriaceae</taxon>
        <taxon>Escherichia</taxon>
    </lineage>
</organism>
<sequence>MFLAQEIIRKKRDGHALSDEEIRFFINGIRDNTISEGQIAALAMTIFFHDMTMPERVSLTMAMRDSGTVLDWKSLHLNGPIVDKHSTGGVGDVTSLMLGPMVAACGGYIPMISGRGLGHTGGTLDKLESIPGFDIFPDDNRFREIIKDVGVAIIGQTSSLAPADKRFYATRDITATVDSIPLITASILAKKLAEGLDALVMDVKVGSGAFMPTYELSEALAEAIVGVANGAGVRTTALLTDMNQVLASSAGNAVEVREAVQFLTGEYRNPRLFDVTMALCVEMLISSKLAKDDAEARAKLQAVLDNGKAAEVFGRMVAAQKGPTDFVENYAKYLPTAMLTKAVYADTEGFVSEMDTRALGMAVVAMGGGRRQASDTIDYSVGFTDMARLGDQVDGQRPLAVIHAKDENSWQEAAKAVKAAIKLADKAPESTPTVYRRISE</sequence>
<accession>B7UR10</accession>
<comment type="function">
    <text evidence="1">The enzymes which catalyze the reversible phosphorolysis of pyrimidine nucleosides are involved in the degradation of these compounds and in their utilization as carbon and energy sources, or in the rescue of pyrimidine bases for nucleotide synthesis.</text>
</comment>
<comment type="catalytic activity">
    <reaction evidence="1">
        <text>thymidine + phosphate = 2-deoxy-alpha-D-ribose 1-phosphate + thymine</text>
        <dbReference type="Rhea" id="RHEA:16037"/>
        <dbReference type="ChEBI" id="CHEBI:17748"/>
        <dbReference type="ChEBI" id="CHEBI:17821"/>
        <dbReference type="ChEBI" id="CHEBI:43474"/>
        <dbReference type="ChEBI" id="CHEBI:57259"/>
        <dbReference type="EC" id="2.4.2.4"/>
    </reaction>
</comment>
<comment type="pathway">
    <text evidence="1">Pyrimidine metabolism; dTMP biosynthesis via salvage pathway; dTMP from thymine: step 1/2.</text>
</comment>
<comment type="subunit">
    <text evidence="1">Homodimer.</text>
</comment>
<comment type="similarity">
    <text evidence="1">Belongs to the thymidine/pyrimidine-nucleoside phosphorylase family.</text>
</comment>
<keyword id="KW-0328">Glycosyltransferase</keyword>
<keyword id="KW-1185">Reference proteome</keyword>
<keyword id="KW-0808">Transferase</keyword>
<evidence type="ECO:0000255" key="1">
    <source>
        <dbReference type="HAMAP-Rule" id="MF_01628"/>
    </source>
</evidence>
<proteinExistence type="inferred from homology"/>
<gene>
    <name evidence="1" type="primary">deoA</name>
    <name type="ordered locus">E2348C_4680</name>
</gene>
<name>TYPH_ECO27</name>
<protein>
    <recommendedName>
        <fullName evidence="1">Thymidine phosphorylase</fullName>
        <ecNumber evidence="1">2.4.2.4</ecNumber>
    </recommendedName>
    <alternativeName>
        <fullName evidence="1">TdRPase</fullName>
    </alternativeName>
</protein>